<organism>
    <name type="scientific">Sphingopyxis alaskensis (strain DSM 13593 / LMG 18877 / RB2256)</name>
    <name type="common">Sphingomonas alaskensis</name>
    <dbReference type="NCBI Taxonomy" id="317655"/>
    <lineage>
        <taxon>Bacteria</taxon>
        <taxon>Pseudomonadati</taxon>
        <taxon>Pseudomonadota</taxon>
        <taxon>Alphaproteobacteria</taxon>
        <taxon>Sphingomonadales</taxon>
        <taxon>Sphingomonadaceae</taxon>
        <taxon>Sphingopyxis</taxon>
    </lineage>
</organism>
<evidence type="ECO:0000255" key="1">
    <source>
        <dbReference type="HAMAP-Rule" id="MF_00081"/>
    </source>
</evidence>
<reference key="1">
    <citation type="journal article" date="2009" name="Proc. Natl. Acad. Sci. U.S.A.">
        <title>The genomic basis of trophic strategy in marine bacteria.</title>
        <authorList>
            <person name="Lauro F.M."/>
            <person name="McDougald D."/>
            <person name="Thomas T."/>
            <person name="Williams T.J."/>
            <person name="Egan S."/>
            <person name="Rice S."/>
            <person name="DeMaere M.Z."/>
            <person name="Ting L."/>
            <person name="Ertan H."/>
            <person name="Johnson J."/>
            <person name="Ferriera S."/>
            <person name="Lapidus A."/>
            <person name="Anderson I."/>
            <person name="Kyrpides N."/>
            <person name="Munk A.C."/>
            <person name="Detter C."/>
            <person name="Han C.S."/>
            <person name="Brown M.V."/>
            <person name="Robb F.T."/>
            <person name="Kjelleberg S."/>
            <person name="Cavicchioli R."/>
        </authorList>
    </citation>
    <scope>NUCLEOTIDE SEQUENCE [LARGE SCALE GENOMIC DNA]</scope>
    <source>
        <strain>DSM 13593 / LMG 18877 / RB2256</strain>
    </source>
</reference>
<protein>
    <recommendedName>
        <fullName evidence="1">Heat-inducible transcription repressor HrcA</fullName>
    </recommendedName>
</protein>
<name>HRCA_SPHAL</name>
<proteinExistence type="inferred from homology"/>
<feature type="chain" id="PRO_1000010448" description="Heat-inducible transcription repressor HrcA">
    <location>
        <begin position="1"/>
        <end position="347"/>
    </location>
</feature>
<gene>
    <name evidence="1" type="primary">hrcA</name>
    <name type="ordered locus">Sala_0253</name>
</gene>
<keyword id="KW-1185">Reference proteome</keyword>
<keyword id="KW-0678">Repressor</keyword>
<keyword id="KW-0346">Stress response</keyword>
<keyword id="KW-0804">Transcription</keyword>
<keyword id="KW-0805">Transcription regulation</keyword>
<sequence length="347" mass="36935">MTTPPITELTTRARDVFRLVVDAYLETGQPVGSRTLSKLATLNLSPASIRNVMQDLEEYGLLASPHTSAGRMPTEQGLRLFVDGMMQVAEPSAEDRAQIEASLSEGGPIESALAQATAALSGLSACAGLVLVPKHERVLKQVAFVPMSERQALVVLVAGDGTVENRIIDVPAGLDPSALVEAGNFISATLSGLTLTEAMARVRREIEAERIAIDRAAQDLVSRGLAIWSSDGADRPVLIVRGQANLLDDSAVGDLDRVRQLLDELETKQDIAQLLDSAREGSATRIFIGSENKLFSLSGSSVIAAPYRGADGRVVGVVGVIGPTRLNYARIVPMVDFTAQSLSRLIR</sequence>
<accession>Q1GWJ6</accession>
<dbReference type="EMBL" id="CP000356">
    <property type="protein sequence ID" value="ABF51976.1"/>
    <property type="molecule type" value="Genomic_DNA"/>
</dbReference>
<dbReference type="RefSeq" id="WP_011540568.1">
    <property type="nucleotide sequence ID" value="NC_008048.1"/>
</dbReference>
<dbReference type="SMR" id="Q1GWJ6"/>
<dbReference type="STRING" id="317655.Sala_0253"/>
<dbReference type="KEGG" id="sal:Sala_0253"/>
<dbReference type="eggNOG" id="COG1420">
    <property type="taxonomic scope" value="Bacteria"/>
</dbReference>
<dbReference type="HOGENOM" id="CLU_050019_0_0_5"/>
<dbReference type="OrthoDB" id="9783139at2"/>
<dbReference type="Proteomes" id="UP000006578">
    <property type="component" value="Chromosome"/>
</dbReference>
<dbReference type="GO" id="GO:0003677">
    <property type="term" value="F:DNA binding"/>
    <property type="evidence" value="ECO:0007669"/>
    <property type="project" value="InterPro"/>
</dbReference>
<dbReference type="GO" id="GO:0045892">
    <property type="term" value="P:negative regulation of DNA-templated transcription"/>
    <property type="evidence" value="ECO:0007669"/>
    <property type="project" value="UniProtKB-UniRule"/>
</dbReference>
<dbReference type="Gene3D" id="3.30.450.40">
    <property type="match status" value="1"/>
</dbReference>
<dbReference type="Gene3D" id="1.10.10.10">
    <property type="entry name" value="Winged helix-like DNA-binding domain superfamily/Winged helix DNA-binding domain"/>
    <property type="match status" value="1"/>
</dbReference>
<dbReference type="HAMAP" id="MF_00081">
    <property type="entry name" value="HrcA"/>
    <property type="match status" value="1"/>
</dbReference>
<dbReference type="InterPro" id="IPR029016">
    <property type="entry name" value="GAF-like_dom_sf"/>
</dbReference>
<dbReference type="InterPro" id="IPR002571">
    <property type="entry name" value="HrcA"/>
</dbReference>
<dbReference type="InterPro" id="IPR021153">
    <property type="entry name" value="HrcA_C"/>
</dbReference>
<dbReference type="InterPro" id="IPR036388">
    <property type="entry name" value="WH-like_DNA-bd_sf"/>
</dbReference>
<dbReference type="InterPro" id="IPR036390">
    <property type="entry name" value="WH_DNA-bd_sf"/>
</dbReference>
<dbReference type="NCBIfam" id="TIGR00331">
    <property type="entry name" value="hrcA"/>
    <property type="match status" value="1"/>
</dbReference>
<dbReference type="PANTHER" id="PTHR34824">
    <property type="entry name" value="HEAT-INDUCIBLE TRANSCRIPTION REPRESSOR HRCA"/>
    <property type="match status" value="1"/>
</dbReference>
<dbReference type="PANTHER" id="PTHR34824:SF1">
    <property type="entry name" value="HEAT-INDUCIBLE TRANSCRIPTION REPRESSOR HRCA"/>
    <property type="match status" value="1"/>
</dbReference>
<dbReference type="Pfam" id="PF01628">
    <property type="entry name" value="HrcA"/>
    <property type="match status" value="1"/>
</dbReference>
<dbReference type="PIRSF" id="PIRSF005485">
    <property type="entry name" value="HrcA"/>
    <property type="match status" value="1"/>
</dbReference>
<dbReference type="SUPFAM" id="SSF55781">
    <property type="entry name" value="GAF domain-like"/>
    <property type="match status" value="1"/>
</dbReference>
<dbReference type="SUPFAM" id="SSF46785">
    <property type="entry name" value="Winged helix' DNA-binding domain"/>
    <property type="match status" value="1"/>
</dbReference>
<comment type="function">
    <text evidence="1">Negative regulator of class I heat shock genes (grpE-dnaK-dnaJ and groELS operons). Prevents heat-shock induction of these operons.</text>
</comment>
<comment type="similarity">
    <text evidence="1">Belongs to the HrcA family.</text>
</comment>